<sequence>MINVTLPDGSKREYAEGASPLDVAESISKSLAKKALAAKVDGQMWDLVRPLEGDASVAIITDRDPEGLELIRHDAAHVLAQAVQELYPDTQVTIGPVIDDGFYYDFARKEPFSTDDFDKIEARMREIVDADYPIVREVLGKDEAIATFKSLGEEYKAQIIDDIIPPGEQITVYRQGKWFDLCRGPHLPSTGKLPKAFKLMKLAGAYWRGDHRNEMLQRMYGTAWANEKDLKDHLTRLEEAEKRDHRKLGAQLDLFHFQPEAQGSVFWHPKGFMIWRELEAYIRRQQDADGYVEVKTPQLLNSVFWEKSGHWSKFRENMFVVPDEIPSTESDAPILSGEGELMALKPMNCPAHVQIFKNAQRSYRDLPIRMAEFGCCHRNEAHGALHGLMRVRQMTQDDAHIFCREDQIADETLRFLKLFETVYGDFGLSEISYKLATRPEMRAGTDETWDRAEKALADALTAAGMTFSIAEGEGAFYGPKLEFHLTDAIGRTWQCGTFQLDYVLPERLDAEYTGSDGAKHRPVMLHRAVFGTFERFMGILIENYAGSFPLWMSPVQVVVAAITDAAGDYAEEAAAALRKAGLRVEVDKRNETINYKVREHSVQKVPVIAVVGAREAEDRKLALRRLGSNGQQIISLDEALVALADEARAPDLKRARS</sequence>
<feature type="chain" id="PRO_1000077362" description="Threonine--tRNA ligase">
    <location>
        <begin position="1"/>
        <end position="657"/>
    </location>
</feature>
<feature type="domain" description="TGS" evidence="2">
    <location>
        <begin position="1"/>
        <end position="61"/>
    </location>
</feature>
<feature type="region of interest" description="Catalytic" evidence="1">
    <location>
        <begin position="244"/>
        <end position="549"/>
    </location>
</feature>
<feature type="binding site" evidence="1">
    <location>
        <position position="349"/>
    </location>
    <ligand>
        <name>Zn(2+)</name>
        <dbReference type="ChEBI" id="CHEBI:29105"/>
    </ligand>
</feature>
<feature type="binding site" evidence="1">
    <location>
        <position position="400"/>
    </location>
    <ligand>
        <name>Zn(2+)</name>
        <dbReference type="ChEBI" id="CHEBI:29105"/>
    </ligand>
</feature>
<feature type="binding site" evidence="1">
    <location>
        <position position="526"/>
    </location>
    <ligand>
        <name>Zn(2+)</name>
        <dbReference type="ChEBI" id="CHEBI:29105"/>
    </ligand>
</feature>
<dbReference type="EC" id="6.1.1.3" evidence="1"/>
<dbReference type="EMBL" id="CP000158">
    <property type="protein sequence ID" value="ABI78232.1"/>
    <property type="molecule type" value="Genomic_DNA"/>
</dbReference>
<dbReference type="RefSeq" id="WP_011648167.1">
    <property type="nucleotide sequence ID" value="NC_008358.1"/>
</dbReference>
<dbReference type="SMR" id="Q0BXC2"/>
<dbReference type="STRING" id="228405.HNE_3196"/>
<dbReference type="KEGG" id="hne:HNE_3196"/>
<dbReference type="eggNOG" id="COG0441">
    <property type="taxonomic scope" value="Bacteria"/>
</dbReference>
<dbReference type="HOGENOM" id="CLU_008554_0_1_5"/>
<dbReference type="Proteomes" id="UP000001959">
    <property type="component" value="Chromosome"/>
</dbReference>
<dbReference type="GO" id="GO:0005737">
    <property type="term" value="C:cytoplasm"/>
    <property type="evidence" value="ECO:0007669"/>
    <property type="project" value="UniProtKB-SubCell"/>
</dbReference>
<dbReference type="GO" id="GO:0005524">
    <property type="term" value="F:ATP binding"/>
    <property type="evidence" value="ECO:0007669"/>
    <property type="project" value="UniProtKB-UniRule"/>
</dbReference>
<dbReference type="GO" id="GO:0046872">
    <property type="term" value="F:metal ion binding"/>
    <property type="evidence" value="ECO:0007669"/>
    <property type="project" value="UniProtKB-KW"/>
</dbReference>
<dbReference type="GO" id="GO:0004829">
    <property type="term" value="F:threonine-tRNA ligase activity"/>
    <property type="evidence" value="ECO:0007669"/>
    <property type="project" value="UniProtKB-UniRule"/>
</dbReference>
<dbReference type="GO" id="GO:0000049">
    <property type="term" value="F:tRNA binding"/>
    <property type="evidence" value="ECO:0007669"/>
    <property type="project" value="UniProtKB-KW"/>
</dbReference>
<dbReference type="GO" id="GO:0006435">
    <property type="term" value="P:threonyl-tRNA aminoacylation"/>
    <property type="evidence" value="ECO:0007669"/>
    <property type="project" value="UniProtKB-UniRule"/>
</dbReference>
<dbReference type="CDD" id="cd01667">
    <property type="entry name" value="TGS_ThrRS"/>
    <property type="match status" value="1"/>
</dbReference>
<dbReference type="CDD" id="cd00860">
    <property type="entry name" value="ThrRS_anticodon"/>
    <property type="match status" value="1"/>
</dbReference>
<dbReference type="CDD" id="cd00771">
    <property type="entry name" value="ThrRS_core"/>
    <property type="match status" value="1"/>
</dbReference>
<dbReference type="FunFam" id="3.10.20.30:FF:000005">
    <property type="entry name" value="Threonine--tRNA ligase"/>
    <property type="match status" value="1"/>
</dbReference>
<dbReference type="FunFam" id="3.30.54.20:FF:000002">
    <property type="entry name" value="Threonine--tRNA ligase"/>
    <property type="match status" value="1"/>
</dbReference>
<dbReference type="FunFam" id="3.30.930.10:FF:000002">
    <property type="entry name" value="Threonine--tRNA ligase"/>
    <property type="match status" value="1"/>
</dbReference>
<dbReference type="FunFam" id="3.40.50.800:FF:000001">
    <property type="entry name" value="Threonine--tRNA ligase"/>
    <property type="match status" value="1"/>
</dbReference>
<dbReference type="FunFam" id="3.30.980.10:FF:000005">
    <property type="entry name" value="Threonyl-tRNA synthetase, mitochondrial"/>
    <property type="match status" value="1"/>
</dbReference>
<dbReference type="Gene3D" id="3.10.20.30">
    <property type="match status" value="1"/>
</dbReference>
<dbReference type="Gene3D" id="3.30.54.20">
    <property type="match status" value="1"/>
</dbReference>
<dbReference type="Gene3D" id="3.40.50.800">
    <property type="entry name" value="Anticodon-binding domain"/>
    <property type="match status" value="1"/>
</dbReference>
<dbReference type="Gene3D" id="3.30.930.10">
    <property type="entry name" value="Bira Bifunctional Protein, Domain 2"/>
    <property type="match status" value="1"/>
</dbReference>
<dbReference type="Gene3D" id="3.30.980.10">
    <property type="entry name" value="Threonyl-trna Synthetase, Chain A, domain 2"/>
    <property type="match status" value="1"/>
</dbReference>
<dbReference type="HAMAP" id="MF_00184">
    <property type="entry name" value="Thr_tRNA_synth"/>
    <property type="match status" value="1"/>
</dbReference>
<dbReference type="InterPro" id="IPR002314">
    <property type="entry name" value="aa-tRNA-synt_IIb"/>
</dbReference>
<dbReference type="InterPro" id="IPR006195">
    <property type="entry name" value="aa-tRNA-synth_II"/>
</dbReference>
<dbReference type="InterPro" id="IPR045864">
    <property type="entry name" value="aa-tRNA-synth_II/BPL/LPL"/>
</dbReference>
<dbReference type="InterPro" id="IPR004154">
    <property type="entry name" value="Anticodon-bd"/>
</dbReference>
<dbReference type="InterPro" id="IPR036621">
    <property type="entry name" value="Anticodon-bd_dom_sf"/>
</dbReference>
<dbReference type="InterPro" id="IPR012675">
    <property type="entry name" value="Beta-grasp_dom_sf"/>
</dbReference>
<dbReference type="InterPro" id="IPR004095">
    <property type="entry name" value="TGS"/>
</dbReference>
<dbReference type="InterPro" id="IPR012676">
    <property type="entry name" value="TGS-like"/>
</dbReference>
<dbReference type="InterPro" id="IPR002320">
    <property type="entry name" value="Thr-tRNA-ligase_IIa"/>
</dbReference>
<dbReference type="InterPro" id="IPR018163">
    <property type="entry name" value="Thr/Ala-tRNA-synth_IIc_edit"/>
</dbReference>
<dbReference type="InterPro" id="IPR047246">
    <property type="entry name" value="ThrRS_anticodon"/>
</dbReference>
<dbReference type="InterPro" id="IPR033728">
    <property type="entry name" value="ThrRS_core"/>
</dbReference>
<dbReference type="InterPro" id="IPR012947">
    <property type="entry name" value="tRNA_SAD"/>
</dbReference>
<dbReference type="NCBIfam" id="TIGR00418">
    <property type="entry name" value="thrS"/>
    <property type="match status" value="1"/>
</dbReference>
<dbReference type="PANTHER" id="PTHR11451:SF44">
    <property type="entry name" value="THREONINE--TRNA LIGASE, CHLOROPLASTIC_MITOCHONDRIAL 2"/>
    <property type="match status" value="1"/>
</dbReference>
<dbReference type="PANTHER" id="PTHR11451">
    <property type="entry name" value="THREONINE-TRNA LIGASE"/>
    <property type="match status" value="1"/>
</dbReference>
<dbReference type="Pfam" id="PF03129">
    <property type="entry name" value="HGTP_anticodon"/>
    <property type="match status" value="1"/>
</dbReference>
<dbReference type="Pfam" id="PF02824">
    <property type="entry name" value="TGS"/>
    <property type="match status" value="1"/>
</dbReference>
<dbReference type="Pfam" id="PF00587">
    <property type="entry name" value="tRNA-synt_2b"/>
    <property type="match status" value="1"/>
</dbReference>
<dbReference type="Pfam" id="PF07973">
    <property type="entry name" value="tRNA_SAD"/>
    <property type="match status" value="1"/>
</dbReference>
<dbReference type="PRINTS" id="PR01047">
    <property type="entry name" value="TRNASYNTHTHR"/>
</dbReference>
<dbReference type="SMART" id="SM00863">
    <property type="entry name" value="tRNA_SAD"/>
    <property type="match status" value="1"/>
</dbReference>
<dbReference type="SUPFAM" id="SSF52954">
    <property type="entry name" value="Class II aaRS ABD-related"/>
    <property type="match status" value="1"/>
</dbReference>
<dbReference type="SUPFAM" id="SSF55681">
    <property type="entry name" value="Class II aaRS and biotin synthetases"/>
    <property type="match status" value="1"/>
</dbReference>
<dbReference type="SUPFAM" id="SSF81271">
    <property type="entry name" value="TGS-like"/>
    <property type="match status" value="1"/>
</dbReference>
<dbReference type="SUPFAM" id="SSF55186">
    <property type="entry name" value="ThrRS/AlaRS common domain"/>
    <property type="match status" value="1"/>
</dbReference>
<dbReference type="PROSITE" id="PS50862">
    <property type="entry name" value="AA_TRNA_LIGASE_II"/>
    <property type="match status" value="1"/>
</dbReference>
<dbReference type="PROSITE" id="PS51880">
    <property type="entry name" value="TGS"/>
    <property type="match status" value="1"/>
</dbReference>
<name>SYT_HYPNA</name>
<evidence type="ECO:0000255" key="1">
    <source>
        <dbReference type="HAMAP-Rule" id="MF_00184"/>
    </source>
</evidence>
<evidence type="ECO:0000255" key="2">
    <source>
        <dbReference type="PROSITE-ProRule" id="PRU01228"/>
    </source>
</evidence>
<comment type="function">
    <text evidence="1">Catalyzes the attachment of threonine to tRNA(Thr) in a two-step reaction: L-threonine is first activated by ATP to form Thr-AMP and then transferred to the acceptor end of tRNA(Thr). Also edits incorrectly charged L-seryl-tRNA(Thr).</text>
</comment>
<comment type="catalytic activity">
    <reaction evidence="1">
        <text>tRNA(Thr) + L-threonine + ATP = L-threonyl-tRNA(Thr) + AMP + diphosphate + H(+)</text>
        <dbReference type="Rhea" id="RHEA:24624"/>
        <dbReference type="Rhea" id="RHEA-COMP:9670"/>
        <dbReference type="Rhea" id="RHEA-COMP:9704"/>
        <dbReference type="ChEBI" id="CHEBI:15378"/>
        <dbReference type="ChEBI" id="CHEBI:30616"/>
        <dbReference type="ChEBI" id="CHEBI:33019"/>
        <dbReference type="ChEBI" id="CHEBI:57926"/>
        <dbReference type="ChEBI" id="CHEBI:78442"/>
        <dbReference type="ChEBI" id="CHEBI:78534"/>
        <dbReference type="ChEBI" id="CHEBI:456215"/>
        <dbReference type="EC" id="6.1.1.3"/>
    </reaction>
</comment>
<comment type="cofactor">
    <cofactor evidence="1">
        <name>Zn(2+)</name>
        <dbReference type="ChEBI" id="CHEBI:29105"/>
    </cofactor>
    <text evidence="1">Binds 1 zinc ion per subunit.</text>
</comment>
<comment type="subunit">
    <text evidence="1">Homodimer.</text>
</comment>
<comment type="subcellular location">
    <subcellularLocation>
        <location evidence="1">Cytoplasm</location>
    </subcellularLocation>
</comment>
<comment type="similarity">
    <text evidence="1">Belongs to the class-II aminoacyl-tRNA synthetase family.</text>
</comment>
<proteinExistence type="inferred from homology"/>
<keyword id="KW-0030">Aminoacyl-tRNA synthetase</keyword>
<keyword id="KW-0067">ATP-binding</keyword>
<keyword id="KW-0963">Cytoplasm</keyword>
<keyword id="KW-0436">Ligase</keyword>
<keyword id="KW-0479">Metal-binding</keyword>
<keyword id="KW-0547">Nucleotide-binding</keyword>
<keyword id="KW-0648">Protein biosynthesis</keyword>
<keyword id="KW-1185">Reference proteome</keyword>
<keyword id="KW-0694">RNA-binding</keyword>
<keyword id="KW-0820">tRNA-binding</keyword>
<keyword id="KW-0862">Zinc</keyword>
<organism>
    <name type="scientific">Hyphomonas neptunium (strain ATCC 15444)</name>
    <dbReference type="NCBI Taxonomy" id="228405"/>
    <lineage>
        <taxon>Bacteria</taxon>
        <taxon>Pseudomonadati</taxon>
        <taxon>Pseudomonadota</taxon>
        <taxon>Alphaproteobacteria</taxon>
        <taxon>Hyphomonadales</taxon>
        <taxon>Hyphomonadaceae</taxon>
        <taxon>Hyphomonas</taxon>
    </lineage>
</organism>
<accession>Q0BXC2</accession>
<reference key="1">
    <citation type="journal article" date="2006" name="J. Bacteriol.">
        <title>Comparative genomic evidence for a close relationship between the dimorphic prosthecate bacteria Hyphomonas neptunium and Caulobacter crescentus.</title>
        <authorList>
            <person name="Badger J.H."/>
            <person name="Hoover T.R."/>
            <person name="Brun Y.V."/>
            <person name="Weiner R.M."/>
            <person name="Laub M.T."/>
            <person name="Alexandre G."/>
            <person name="Mrazek J."/>
            <person name="Ren Q."/>
            <person name="Paulsen I.T."/>
            <person name="Nelson K.E."/>
            <person name="Khouri H.M."/>
            <person name="Radune D."/>
            <person name="Sosa J."/>
            <person name="Dodson R.J."/>
            <person name="Sullivan S.A."/>
            <person name="Rosovitz M.J."/>
            <person name="Madupu R."/>
            <person name="Brinkac L.M."/>
            <person name="Durkin A.S."/>
            <person name="Daugherty S.C."/>
            <person name="Kothari S.P."/>
            <person name="Giglio M.G."/>
            <person name="Zhou L."/>
            <person name="Haft D.H."/>
            <person name="Selengut J.D."/>
            <person name="Davidsen T.M."/>
            <person name="Yang Q."/>
            <person name="Zafar N."/>
            <person name="Ward N.L."/>
        </authorList>
    </citation>
    <scope>NUCLEOTIDE SEQUENCE [LARGE SCALE GENOMIC DNA]</scope>
    <source>
        <strain>ATCC 15444</strain>
    </source>
</reference>
<protein>
    <recommendedName>
        <fullName evidence="1">Threonine--tRNA ligase</fullName>
        <ecNumber evidence="1">6.1.1.3</ecNumber>
    </recommendedName>
    <alternativeName>
        <fullName evidence="1">Threonyl-tRNA synthetase</fullName>
        <shortName evidence="1">ThrRS</shortName>
    </alternativeName>
</protein>
<gene>
    <name evidence="1" type="primary">thrS</name>
    <name type="ordered locus">HNE_3196</name>
</gene>